<name>RR18_SOLBU</name>
<dbReference type="EMBL" id="DQ347958">
    <property type="protein sequence ID" value="ABC56235.1"/>
    <property type="molecule type" value="Genomic_DNA"/>
</dbReference>
<dbReference type="RefSeq" id="YP_538870.1">
    <property type="nucleotide sequence ID" value="NC_007943.1"/>
</dbReference>
<dbReference type="SMR" id="Q2MIG5"/>
<dbReference type="GeneID" id="3989515"/>
<dbReference type="GO" id="GO:0009507">
    <property type="term" value="C:chloroplast"/>
    <property type="evidence" value="ECO:0007669"/>
    <property type="project" value="UniProtKB-SubCell"/>
</dbReference>
<dbReference type="GO" id="GO:0005763">
    <property type="term" value="C:mitochondrial small ribosomal subunit"/>
    <property type="evidence" value="ECO:0007669"/>
    <property type="project" value="TreeGrafter"/>
</dbReference>
<dbReference type="GO" id="GO:0070181">
    <property type="term" value="F:small ribosomal subunit rRNA binding"/>
    <property type="evidence" value="ECO:0007669"/>
    <property type="project" value="TreeGrafter"/>
</dbReference>
<dbReference type="GO" id="GO:0003735">
    <property type="term" value="F:structural constituent of ribosome"/>
    <property type="evidence" value="ECO:0007669"/>
    <property type="project" value="InterPro"/>
</dbReference>
<dbReference type="GO" id="GO:0006412">
    <property type="term" value="P:translation"/>
    <property type="evidence" value="ECO:0007669"/>
    <property type="project" value="UniProtKB-UniRule"/>
</dbReference>
<dbReference type="FunFam" id="4.10.640.10:FF:000002">
    <property type="entry name" value="30S ribosomal protein S18, chloroplastic"/>
    <property type="match status" value="1"/>
</dbReference>
<dbReference type="Gene3D" id="4.10.640.10">
    <property type="entry name" value="Ribosomal protein S18"/>
    <property type="match status" value="1"/>
</dbReference>
<dbReference type="HAMAP" id="MF_00270">
    <property type="entry name" value="Ribosomal_bS18"/>
    <property type="match status" value="1"/>
</dbReference>
<dbReference type="InterPro" id="IPR001648">
    <property type="entry name" value="Ribosomal_bS18"/>
</dbReference>
<dbReference type="InterPro" id="IPR018275">
    <property type="entry name" value="Ribosomal_bS18_CS"/>
</dbReference>
<dbReference type="InterPro" id="IPR036870">
    <property type="entry name" value="Ribosomal_bS18_sf"/>
</dbReference>
<dbReference type="NCBIfam" id="TIGR00165">
    <property type="entry name" value="S18"/>
    <property type="match status" value="1"/>
</dbReference>
<dbReference type="PANTHER" id="PTHR13479">
    <property type="entry name" value="30S RIBOSOMAL PROTEIN S18"/>
    <property type="match status" value="1"/>
</dbReference>
<dbReference type="PANTHER" id="PTHR13479:SF40">
    <property type="entry name" value="SMALL RIBOSOMAL SUBUNIT PROTEIN BS18M"/>
    <property type="match status" value="1"/>
</dbReference>
<dbReference type="Pfam" id="PF01084">
    <property type="entry name" value="Ribosomal_S18"/>
    <property type="match status" value="1"/>
</dbReference>
<dbReference type="PRINTS" id="PR00974">
    <property type="entry name" value="RIBOSOMALS18"/>
</dbReference>
<dbReference type="SUPFAM" id="SSF46911">
    <property type="entry name" value="Ribosomal protein S18"/>
    <property type="match status" value="1"/>
</dbReference>
<dbReference type="PROSITE" id="PS00057">
    <property type="entry name" value="RIBOSOMAL_S18"/>
    <property type="match status" value="1"/>
</dbReference>
<organism>
    <name type="scientific">Solanum bulbocastanum</name>
    <name type="common">Wild potato</name>
    <dbReference type="NCBI Taxonomy" id="147425"/>
    <lineage>
        <taxon>Eukaryota</taxon>
        <taxon>Viridiplantae</taxon>
        <taxon>Streptophyta</taxon>
        <taxon>Embryophyta</taxon>
        <taxon>Tracheophyta</taxon>
        <taxon>Spermatophyta</taxon>
        <taxon>Magnoliopsida</taxon>
        <taxon>eudicotyledons</taxon>
        <taxon>Gunneridae</taxon>
        <taxon>Pentapetalae</taxon>
        <taxon>asterids</taxon>
        <taxon>lamiids</taxon>
        <taxon>Solanales</taxon>
        <taxon>Solanaceae</taxon>
        <taxon>Solanoideae</taxon>
        <taxon>Solaneae</taxon>
        <taxon>Solanum</taxon>
    </lineage>
</organism>
<proteinExistence type="inferred from homology"/>
<reference key="1">
    <citation type="journal article" date="2006" name="Theor. Appl. Genet.">
        <title>Complete chloroplast genome sequences of Solanum bulbocastanum, Solanum lycopersicum and comparative analyses with other Solanaceae genomes.</title>
        <authorList>
            <person name="Daniell H."/>
            <person name="Lee S.-B."/>
            <person name="Grevich J."/>
            <person name="Saski C."/>
            <person name="Quesada-Vargas T."/>
            <person name="Guda C."/>
            <person name="Tomkins J."/>
            <person name="Jansen R.K."/>
        </authorList>
    </citation>
    <scope>NUCLEOTIDE SEQUENCE [LARGE SCALE GENOMIC DNA]</scope>
    <source>
        <strain>cv. PT29</strain>
    </source>
</reference>
<sequence>MDKSKRPFLKFKRSFRRRLPPIQSGDRIDYRNMSLISRFISEQGKILSRRVNRLTLKQQRLITLAIKQARILSLLPFLNNEKQFERTESTARTTGFKARNK</sequence>
<accession>Q2MIG5</accession>
<evidence type="ECO:0000255" key="1">
    <source>
        <dbReference type="HAMAP-Rule" id="MF_00270"/>
    </source>
</evidence>
<evidence type="ECO:0000305" key="2"/>
<keyword id="KW-0150">Chloroplast</keyword>
<keyword id="KW-0934">Plastid</keyword>
<keyword id="KW-0687">Ribonucleoprotein</keyword>
<keyword id="KW-0689">Ribosomal protein</keyword>
<keyword id="KW-0694">RNA-binding</keyword>
<keyword id="KW-0699">rRNA-binding</keyword>
<gene>
    <name evidence="1" type="primary">rps18</name>
</gene>
<protein>
    <recommendedName>
        <fullName evidence="1">Small ribosomal subunit protein bS18c</fullName>
    </recommendedName>
    <alternativeName>
        <fullName evidence="2">30S ribosomal protein S18, chloroplastic</fullName>
    </alternativeName>
</protein>
<geneLocation type="chloroplast"/>
<feature type="chain" id="PRO_0000276887" description="Small ribosomal subunit protein bS18c">
    <location>
        <begin position="1"/>
        <end position="101"/>
    </location>
</feature>
<comment type="subunit">
    <text>Part of the 30S ribosomal subunit.</text>
</comment>
<comment type="subcellular location">
    <subcellularLocation>
        <location>Plastid</location>
        <location>Chloroplast</location>
    </subcellularLocation>
</comment>
<comment type="similarity">
    <text evidence="1">Belongs to the bacterial ribosomal protein bS18 family.</text>
</comment>